<accession>Q5E9Q3</accession>
<accession>A6QQF9</accession>
<accession>Q5E9W7</accession>
<accession>Q5EA69</accession>
<evidence type="ECO:0000250" key="1">
    <source>
        <dbReference type="UniProtKB" id="Q3URS9"/>
    </source>
</evidence>
<evidence type="ECO:0000250" key="2">
    <source>
        <dbReference type="UniProtKB" id="Q96ER9"/>
    </source>
</evidence>
<evidence type="ECO:0000255" key="3"/>
<evidence type="ECO:0000305" key="4"/>
<organism>
    <name type="scientific">Bos taurus</name>
    <name type="common">Bovine</name>
    <dbReference type="NCBI Taxonomy" id="9913"/>
    <lineage>
        <taxon>Eukaryota</taxon>
        <taxon>Metazoa</taxon>
        <taxon>Chordata</taxon>
        <taxon>Craniata</taxon>
        <taxon>Vertebrata</taxon>
        <taxon>Euteleostomi</taxon>
        <taxon>Mammalia</taxon>
        <taxon>Eutheria</taxon>
        <taxon>Laurasiatheria</taxon>
        <taxon>Artiodactyla</taxon>
        <taxon>Ruminantia</taxon>
        <taxon>Pecora</taxon>
        <taxon>Bovidae</taxon>
        <taxon>Bovinae</taxon>
        <taxon>Bos</taxon>
    </lineage>
</organism>
<keyword id="KW-0175">Coiled coil</keyword>
<keyword id="KW-0407">Ion channel</keyword>
<keyword id="KW-0406">Ion transport</keyword>
<keyword id="KW-0472">Membrane</keyword>
<keyword id="KW-0496">Mitochondrion</keyword>
<keyword id="KW-0999">Mitochondrion inner membrane</keyword>
<keyword id="KW-0597">Phosphoprotein</keyword>
<keyword id="KW-0630">Potassium</keyword>
<keyword id="KW-0631">Potassium channel</keyword>
<keyword id="KW-0633">Potassium transport</keyword>
<keyword id="KW-1185">Reference proteome</keyword>
<keyword id="KW-0809">Transit peptide</keyword>
<keyword id="KW-0812">Transmembrane</keyword>
<keyword id="KW-1133">Transmembrane helix</keyword>
<keyword id="KW-0813">Transport</keyword>
<feature type="transit peptide" description="Mitochondrion" evidence="3">
    <location>
        <begin position="1"/>
        <end position="30"/>
    </location>
</feature>
<feature type="chain" id="PRO_0000288867" description="Mitochondrial potassium channel" evidence="1">
    <location>
        <begin position="31"/>
        <end position="404"/>
    </location>
</feature>
<feature type="topological domain" description="Mitochondrial matrix" evidence="1">
    <location>
        <begin position="31"/>
        <end position="196"/>
    </location>
</feature>
<feature type="transmembrane region" description="Helical" evidence="3">
    <location>
        <begin position="197"/>
        <end position="217"/>
    </location>
</feature>
<feature type="topological domain" description="Mitochondrial intermembrane" evidence="1">
    <location>
        <begin position="218"/>
        <end position="380"/>
    </location>
</feature>
<feature type="transmembrane region" description="Helical" evidence="3">
    <location>
        <begin position="381"/>
        <end position="401"/>
    </location>
</feature>
<feature type="topological domain" description="Mitochondrial matrix" evidence="1">
    <location>
        <begin position="402"/>
        <end position="404"/>
    </location>
</feature>
<feature type="coiled-coil region" evidence="3">
    <location>
        <begin position="111"/>
        <end position="138"/>
    </location>
</feature>
<feature type="modified residue" description="Phosphoserine" evidence="2">
    <location>
        <position position="65"/>
    </location>
</feature>
<feature type="sequence conflict" description="In Ref. 1; AAX08820." evidence="4" ref="1">
    <original>A</original>
    <variation>S</variation>
    <location>
        <position position="166"/>
    </location>
</feature>
<feature type="sequence conflict" description="In Ref. 1; AAX08820." evidence="4" ref="1">
    <original>F</original>
    <variation>L</variation>
    <location>
        <position position="174"/>
    </location>
</feature>
<feature type="sequence conflict" description="In Ref. 1; AAX08678/AAX08717/AAX08819." evidence="4" ref="1">
    <original>T</original>
    <variation>M</variation>
    <location>
        <position position="389"/>
    </location>
</feature>
<dbReference type="EMBL" id="BT020661">
    <property type="protein sequence ID" value="AAX08678.1"/>
    <property type="molecule type" value="mRNA"/>
</dbReference>
<dbReference type="EMBL" id="BT020700">
    <property type="protein sequence ID" value="AAX08717.1"/>
    <property type="molecule type" value="mRNA"/>
</dbReference>
<dbReference type="EMBL" id="BT020802">
    <property type="protein sequence ID" value="AAX08819.1"/>
    <property type="molecule type" value="mRNA"/>
</dbReference>
<dbReference type="EMBL" id="BT020803">
    <property type="protein sequence ID" value="AAX08820.1"/>
    <property type="molecule type" value="mRNA"/>
</dbReference>
<dbReference type="EMBL" id="BT020853">
    <property type="protein sequence ID" value="AAX08870.1"/>
    <property type="molecule type" value="mRNA"/>
</dbReference>
<dbReference type="EMBL" id="BT020867">
    <property type="protein sequence ID" value="AAX08884.1"/>
    <property type="molecule type" value="mRNA"/>
</dbReference>
<dbReference type="EMBL" id="BC149811">
    <property type="protein sequence ID" value="AAI49812.1"/>
    <property type="molecule type" value="mRNA"/>
</dbReference>
<dbReference type="RefSeq" id="NP_001015619.1">
    <property type="nucleotide sequence ID" value="NM_001015619.1"/>
</dbReference>
<dbReference type="RefSeq" id="XP_005222886.1">
    <property type="nucleotide sequence ID" value="XM_005222829.5"/>
</dbReference>
<dbReference type="RefSeq" id="XP_005222887.1">
    <property type="nucleotide sequence ID" value="XM_005222830.5"/>
</dbReference>
<dbReference type="RefSeq" id="XP_005222888.1">
    <property type="nucleotide sequence ID" value="XM_005222831.3"/>
</dbReference>
<dbReference type="RefSeq" id="XP_010816031.1">
    <property type="nucleotide sequence ID" value="XM_010817729.4"/>
</dbReference>
<dbReference type="RefSeq" id="XP_059735644.1">
    <property type="nucleotide sequence ID" value="XM_059879661.1"/>
</dbReference>
<dbReference type="RefSeq" id="XP_059735645.1">
    <property type="nucleotide sequence ID" value="XM_059879662.1"/>
</dbReference>
<dbReference type="SMR" id="Q5E9Q3"/>
<dbReference type="FunCoup" id="Q5E9Q3">
    <property type="interactions" value="1393"/>
</dbReference>
<dbReference type="STRING" id="9913.ENSBTAP00000058493"/>
<dbReference type="PaxDb" id="9913-ENSBTAP00000017844"/>
<dbReference type="Ensembl" id="ENSBTAT00000017844.5">
    <property type="protein sequence ID" value="ENSBTAP00000017844.3"/>
    <property type="gene ID" value="ENSBTAG00000013413.5"/>
</dbReference>
<dbReference type="GeneID" id="517515"/>
<dbReference type="KEGG" id="bta:517515"/>
<dbReference type="CTD" id="79714"/>
<dbReference type="VEuPathDB" id="HostDB:ENSBTAG00000013413"/>
<dbReference type="VGNC" id="VGNC:26899">
    <property type="gene designation" value="CCDC51"/>
</dbReference>
<dbReference type="eggNOG" id="ENOG502QWCS">
    <property type="taxonomic scope" value="Eukaryota"/>
</dbReference>
<dbReference type="GeneTree" id="ENSGT00390000001709"/>
<dbReference type="HOGENOM" id="CLU_060968_0_0_1"/>
<dbReference type="InParanoid" id="Q5E9Q3"/>
<dbReference type="OMA" id="STATTWW"/>
<dbReference type="OrthoDB" id="6243211at2759"/>
<dbReference type="TreeFam" id="TF318449"/>
<dbReference type="Proteomes" id="UP000009136">
    <property type="component" value="Chromosome 22"/>
</dbReference>
<dbReference type="Bgee" id="ENSBTAG00000013413">
    <property type="expression patterns" value="Expressed in digestive system secreted substance and 103 other cell types or tissues"/>
</dbReference>
<dbReference type="GO" id="GO:0062157">
    <property type="term" value="C:mitochondrial ATP-gated potassium channel complex"/>
    <property type="evidence" value="ECO:0000250"/>
    <property type="project" value="UniProtKB"/>
</dbReference>
<dbReference type="GO" id="GO:0005743">
    <property type="term" value="C:mitochondrial inner membrane"/>
    <property type="evidence" value="ECO:0000250"/>
    <property type="project" value="UniProtKB"/>
</dbReference>
<dbReference type="GO" id="GO:0062156">
    <property type="term" value="F:mitochondrial ATP-gated potassium channel activity"/>
    <property type="evidence" value="ECO:0000250"/>
    <property type="project" value="UniProtKB"/>
</dbReference>
<dbReference type="GO" id="GO:0006884">
    <property type="term" value="P:cell volume homeostasis"/>
    <property type="evidence" value="ECO:0007669"/>
    <property type="project" value="Ensembl"/>
</dbReference>
<dbReference type="GO" id="GO:0140141">
    <property type="term" value="P:mitochondrial potassium ion transmembrane transport"/>
    <property type="evidence" value="ECO:0007669"/>
    <property type="project" value="Ensembl"/>
</dbReference>
<dbReference type="GO" id="GO:0071805">
    <property type="term" value="P:potassium ion transmembrane transport"/>
    <property type="evidence" value="ECO:0000250"/>
    <property type="project" value="UniProtKB"/>
</dbReference>
<dbReference type="InterPro" id="IPR037660">
    <property type="entry name" value="CCDC51"/>
</dbReference>
<dbReference type="PANTHER" id="PTHR28624">
    <property type="entry name" value="COILED-COIL DOMAIN-CONTAINING PROTEIN 51"/>
    <property type="match status" value="1"/>
</dbReference>
<dbReference type="PANTHER" id="PTHR28624:SF1">
    <property type="entry name" value="MITOCHONDRIAL POTASSIUM CHANNEL"/>
    <property type="match status" value="1"/>
</dbReference>
<reference key="1">
    <citation type="journal article" date="2005" name="BMC Genomics">
        <title>Characterization of 954 bovine full-CDS cDNA sequences.</title>
        <authorList>
            <person name="Harhay G.P."/>
            <person name="Sonstegard T.S."/>
            <person name="Keele J.W."/>
            <person name="Heaton M.P."/>
            <person name="Clawson M.L."/>
            <person name="Snelling W.M."/>
            <person name="Wiedmann R.T."/>
            <person name="Van Tassell C.P."/>
            <person name="Smith T.P.L."/>
        </authorList>
    </citation>
    <scope>NUCLEOTIDE SEQUENCE [LARGE SCALE MRNA]</scope>
</reference>
<reference key="2">
    <citation type="submission" date="2007-07" db="EMBL/GenBank/DDBJ databases">
        <authorList>
            <consortium name="NIH - Mammalian Gene Collection (MGC) project"/>
        </authorList>
    </citation>
    <scope>NUCLEOTIDE SEQUENCE [LARGE SCALE MRNA]</scope>
    <source>
        <strain>Hereford</strain>
        <tissue>Fetal skin</tissue>
    </source>
</reference>
<protein>
    <recommendedName>
        <fullName evidence="1">Mitochondrial potassium channel</fullName>
        <shortName evidence="1">MITOK</shortName>
    </recommendedName>
    <alternativeName>
        <fullName>Coiled-coil domain-containing protein 51</fullName>
    </alternativeName>
</protein>
<gene>
    <name evidence="1" type="primary">CCDC51</name>
    <name evidence="1" type="synonym">Mitok</name>
</gene>
<comment type="function">
    <text evidence="1">Pore-forming subunit of the mitochondrial ATP-gated potassium channel (mitoK(ATP)). Together with ATP-binding subunit ABCB8/MITOSUR of the mitoK(ATP) channel, mediates ATP-dependent K(+) currents across the mitochondrial inner membrane. An increase in ATP intracellular levels closes the channel, inhibiting K(+) transport, whereas a decrease in ATP levels enhances K(+) uptake in the mitochondrial matrix. May contribute to the homeostatic control of cellular metabolism under stress conditions by regulating the mitochondrial matrix volume.</text>
</comment>
<comment type="catalytic activity">
    <reaction evidence="1">
        <text>K(+)(in) = K(+)(out)</text>
        <dbReference type="Rhea" id="RHEA:29463"/>
        <dbReference type="ChEBI" id="CHEBI:29103"/>
    </reaction>
</comment>
<comment type="activity regulation">
    <text evidence="2">Channel activity inhibited by ATP via ABCB8/MITOSUR subunit.</text>
</comment>
<comment type="subunit">
    <text evidence="1">The mitochondrial potassium channel (mitoK(ATP)) forms a heteromultimer.</text>
</comment>
<comment type="subcellular location">
    <subcellularLocation>
        <location evidence="1">Mitochondrion inner membrane</location>
        <topology evidence="3">Multi-pass membrane protein</topology>
    </subcellularLocation>
</comment>
<name>MITOK_BOVIN</name>
<sequence>MTGRSRVLAMRHVGGVSPVLVRRDLFLTRTLCSHGPSQPREKRPEEVALGLYHRLTALGAALGHSIRQRASSTAKTWWDRYEEFVGLNEVREAQGNVTEAEKVFMVARGLVREAREDLESQQTKLKEVRDRLDRISRDDNQYLELATLEHRMLQEEKRLRMTYLRAEDSEREKFSLFSAAVRESHEKERTRAERTKNWSLIGSVLGALIGVAGSTYVNRVRLQELKALLLEAQKGPVSLQEAIREQASSYSLQQRDLRDLVADLKGLVQAGTGQGSLSQAGSSPTQDRDTDVLSAALREQLSHSRQVRSRLEGLREQLDGLEKTVSQVAGVVQLAKAAAHPGLESADGALPGSLLEQGSMIMALSDTEQRLEAQVNRNTVYGTLVTCATFVAVLPVLYMLFRAS</sequence>
<proteinExistence type="evidence at transcript level"/>